<reference key="1">
    <citation type="journal article" date="2000" name="Nature">
        <title>The genome sequence of the plant pathogen Xylella fastidiosa.</title>
        <authorList>
            <person name="Simpson A.J.G."/>
            <person name="Reinach F.C."/>
            <person name="Arruda P."/>
            <person name="Abreu F.A."/>
            <person name="Acencio M."/>
            <person name="Alvarenga R."/>
            <person name="Alves L.M.C."/>
            <person name="Araya J.E."/>
            <person name="Baia G.S."/>
            <person name="Baptista C.S."/>
            <person name="Barros M.H."/>
            <person name="Bonaccorsi E.D."/>
            <person name="Bordin S."/>
            <person name="Bove J.M."/>
            <person name="Briones M.R.S."/>
            <person name="Bueno M.R.P."/>
            <person name="Camargo A.A."/>
            <person name="Camargo L.E.A."/>
            <person name="Carraro D.M."/>
            <person name="Carrer H."/>
            <person name="Colauto N.B."/>
            <person name="Colombo C."/>
            <person name="Costa F.F."/>
            <person name="Costa M.C.R."/>
            <person name="Costa-Neto C.M."/>
            <person name="Coutinho L.L."/>
            <person name="Cristofani M."/>
            <person name="Dias-Neto E."/>
            <person name="Docena C."/>
            <person name="El-Dorry H."/>
            <person name="Facincani A.P."/>
            <person name="Ferreira A.J.S."/>
            <person name="Ferreira V.C.A."/>
            <person name="Ferro J.A."/>
            <person name="Fraga J.S."/>
            <person name="Franca S.C."/>
            <person name="Franco M.C."/>
            <person name="Frohme M."/>
            <person name="Furlan L.R."/>
            <person name="Garnier M."/>
            <person name="Goldman G.H."/>
            <person name="Goldman M.H.S."/>
            <person name="Gomes S.L."/>
            <person name="Gruber A."/>
            <person name="Ho P.L."/>
            <person name="Hoheisel J.D."/>
            <person name="Junqueira M.L."/>
            <person name="Kemper E.L."/>
            <person name="Kitajima J.P."/>
            <person name="Krieger J.E."/>
            <person name="Kuramae E.E."/>
            <person name="Laigret F."/>
            <person name="Lambais M.R."/>
            <person name="Leite L.C.C."/>
            <person name="Lemos E.G.M."/>
            <person name="Lemos M.V.F."/>
            <person name="Lopes S.A."/>
            <person name="Lopes C.R."/>
            <person name="Machado J.A."/>
            <person name="Machado M.A."/>
            <person name="Madeira A.M.B.N."/>
            <person name="Madeira H.M.F."/>
            <person name="Marino C.L."/>
            <person name="Marques M.V."/>
            <person name="Martins E.A.L."/>
            <person name="Martins E.M.F."/>
            <person name="Matsukuma A.Y."/>
            <person name="Menck C.F.M."/>
            <person name="Miracca E.C."/>
            <person name="Miyaki C.Y."/>
            <person name="Monteiro-Vitorello C.B."/>
            <person name="Moon D.H."/>
            <person name="Nagai M.A."/>
            <person name="Nascimento A.L.T.O."/>
            <person name="Netto L.E.S."/>
            <person name="Nhani A. Jr."/>
            <person name="Nobrega F.G."/>
            <person name="Nunes L.R."/>
            <person name="Oliveira M.A."/>
            <person name="de Oliveira M.C."/>
            <person name="de Oliveira R.C."/>
            <person name="Palmieri D.A."/>
            <person name="Paris A."/>
            <person name="Peixoto B.R."/>
            <person name="Pereira G.A.G."/>
            <person name="Pereira H.A. Jr."/>
            <person name="Pesquero J.B."/>
            <person name="Quaggio R.B."/>
            <person name="Roberto P.G."/>
            <person name="Rodrigues V."/>
            <person name="de Rosa A.J.M."/>
            <person name="de Rosa V.E. Jr."/>
            <person name="de Sa R.G."/>
            <person name="Santelli R.V."/>
            <person name="Sawasaki H.E."/>
            <person name="da Silva A.C.R."/>
            <person name="da Silva A.M."/>
            <person name="da Silva F.R."/>
            <person name="Silva W.A. Jr."/>
            <person name="da Silveira J.F."/>
            <person name="Silvestri M.L.Z."/>
            <person name="Siqueira W.J."/>
            <person name="de Souza A.A."/>
            <person name="de Souza A.P."/>
            <person name="Terenzi M.F."/>
            <person name="Truffi D."/>
            <person name="Tsai S.M."/>
            <person name="Tsuhako M.H."/>
            <person name="Vallada H."/>
            <person name="Van Sluys M.A."/>
            <person name="Verjovski-Almeida S."/>
            <person name="Vettore A.L."/>
            <person name="Zago M.A."/>
            <person name="Zatz M."/>
            <person name="Meidanis J."/>
            <person name="Setubal J.C."/>
        </authorList>
    </citation>
    <scope>NUCLEOTIDE SEQUENCE [LARGE SCALE GENOMIC DNA]</scope>
    <source>
        <strain>9a5c</strain>
    </source>
</reference>
<keyword id="KW-0028">Amino-acid biosynthesis</keyword>
<keyword id="KW-0032">Aminotransferase</keyword>
<keyword id="KW-0055">Arginine biosynthesis</keyword>
<keyword id="KW-0963">Cytoplasm</keyword>
<keyword id="KW-0663">Pyridoxal phosphate</keyword>
<keyword id="KW-0808">Transferase</keyword>
<evidence type="ECO:0000255" key="1">
    <source>
        <dbReference type="HAMAP-Rule" id="MF_01107"/>
    </source>
</evidence>
<accession>Q9PDF2</accession>
<comment type="catalytic activity">
    <reaction evidence="1">
        <text>N(2)-acetyl-L-ornithine + 2-oxoglutarate = N-acetyl-L-glutamate 5-semialdehyde + L-glutamate</text>
        <dbReference type="Rhea" id="RHEA:18049"/>
        <dbReference type="ChEBI" id="CHEBI:16810"/>
        <dbReference type="ChEBI" id="CHEBI:29123"/>
        <dbReference type="ChEBI" id="CHEBI:29985"/>
        <dbReference type="ChEBI" id="CHEBI:57805"/>
        <dbReference type="EC" id="2.6.1.11"/>
    </reaction>
</comment>
<comment type="cofactor">
    <cofactor evidence="1">
        <name>pyridoxal 5'-phosphate</name>
        <dbReference type="ChEBI" id="CHEBI:597326"/>
    </cofactor>
    <text evidence="1">Binds 1 pyridoxal phosphate per subunit.</text>
</comment>
<comment type="pathway">
    <text evidence="1">Amino-acid biosynthesis; L-arginine biosynthesis; N(2)-acetyl-L-ornithine from L-glutamate: step 4/4.</text>
</comment>
<comment type="subunit">
    <text evidence="1">Homodimer.</text>
</comment>
<comment type="subcellular location">
    <subcellularLocation>
        <location evidence="1">Cytoplasm</location>
    </subcellularLocation>
</comment>
<comment type="miscellaneous">
    <text evidence="1">May also have succinyldiaminopimelate aminotransferase activity, thus carrying out the corresponding step in lysine biosynthesis.</text>
</comment>
<comment type="similarity">
    <text evidence="1">Belongs to the class-III pyridoxal-phosphate-dependent aminotransferase family. ArgD subfamily.</text>
</comment>
<gene>
    <name evidence="1" type="primary">argD</name>
    <name type="ordered locus">XF_1427</name>
</gene>
<dbReference type="EC" id="2.6.1.11" evidence="1"/>
<dbReference type="EMBL" id="AE003849">
    <property type="protein sequence ID" value="AAF84236.1"/>
    <property type="molecule type" value="Genomic_DNA"/>
</dbReference>
<dbReference type="PIR" id="B82682">
    <property type="entry name" value="B82682"/>
</dbReference>
<dbReference type="RefSeq" id="WP_010893928.1">
    <property type="nucleotide sequence ID" value="NC_002488.3"/>
</dbReference>
<dbReference type="SMR" id="Q9PDF2"/>
<dbReference type="STRING" id="160492.XF_1427"/>
<dbReference type="KEGG" id="xfa:XF_1427"/>
<dbReference type="eggNOG" id="COG4992">
    <property type="taxonomic scope" value="Bacteria"/>
</dbReference>
<dbReference type="HOGENOM" id="CLU_016922_10_1_6"/>
<dbReference type="UniPathway" id="UPA00068">
    <property type="reaction ID" value="UER00109"/>
</dbReference>
<dbReference type="Proteomes" id="UP000000812">
    <property type="component" value="Chromosome"/>
</dbReference>
<dbReference type="GO" id="GO:0005737">
    <property type="term" value="C:cytoplasm"/>
    <property type="evidence" value="ECO:0007669"/>
    <property type="project" value="UniProtKB-SubCell"/>
</dbReference>
<dbReference type="GO" id="GO:0042802">
    <property type="term" value="F:identical protein binding"/>
    <property type="evidence" value="ECO:0007669"/>
    <property type="project" value="TreeGrafter"/>
</dbReference>
<dbReference type="GO" id="GO:0003992">
    <property type="term" value="F:N2-acetyl-L-ornithine:2-oxoglutarate 5-aminotransferase activity"/>
    <property type="evidence" value="ECO:0007669"/>
    <property type="project" value="UniProtKB-UniRule"/>
</dbReference>
<dbReference type="GO" id="GO:0030170">
    <property type="term" value="F:pyridoxal phosphate binding"/>
    <property type="evidence" value="ECO:0007669"/>
    <property type="project" value="InterPro"/>
</dbReference>
<dbReference type="GO" id="GO:0006526">
    <property type="term" value="P:L-arginine biosynthetic process"/>
    <property type="evidence" value="ECO:0007669"/>
    <property type="project" value="UniProtKB-UniRule"/>
</dbReference>
<dbReference type="CDD" id="cd00610">
    <property type="entry name" value="OAT_like"/>
    <property type="match status" value="1"/>
</dbReference>
<dbReference type="FunFam" id="3.40.640.10:FF:000117">
    <property type="entry name" value="Acetylornithine aminotransferase"/>
    <property type="match status" value="1"/>
</dbReference>
<dbReference type="Gene3D" id="3.90.1150.10">
    <property type="entry name" value="Aspartate Aminotransferase, domain 1"/>
    <property type="match status" value="1"/>
</dbReference>
<dbReference type="Gene3D" id="3.40.640.10">
    <property type="entry name" value="Type I PLP-dependent aspartate aminotransferase-like (Major domain)"/>
    <property type="match status" value="1"/>
</dbReference>
<dbReference type="HAMAP" id="MF_01107">
    <property type="entry name" value="ArgD_aminotrans_3"/>
    <property type="match status" value="1"/>
</dbReference>
<dbReference type="InterPro" id="IPR004636">
    <property type="entry name" value="AcOrn/SuccOrn_fam"/>
</dbReference>
<dbReference type="InterPro" id="IPR005814">
    <property type="entry name" value="Aminotrans_3"/>
</dbReference>
<dbReference type="InterPro" id="IPR049704">
    <property type="entry name" value="Aminotrans_3_PPA_site"/>
</dbReference>
<dbReference type="InterPro" id="IPR050103">
    <property type="entry name" value="Class-III_PLP-dep_AT"/>
</dbReference>
<dbReference type="InterPro" id="IPR015424">
    <property type="entry name" value="PyrdxlP-dep_Trfase"/>
</dbReference>
<dbReference type="InterPro" id="IPR015421">
    <property type="entry name" value="PyrdxlP-dep_Trfase_major"/>
</dbReference>
<dbReference type="InterPro" id="IPR015422">
    <property type="entry name" value="PyrdxlP-dep_Trfase_small"/>
</dbReference>
<dbReference type="NCBIfam" id="TIGR00707">
    <property type="entry name" value="argD"/>
    <property type="match status" value="1"/>
</dbReference>
<dbReference type="NCBIfam" id="NF002325">
    <property type="entry name" value="PRK01278.1"/>
    <property type="match status" value="1"/>
</dbReference>
<dbReference type="NCBIfam" id="NF003397">
    <property type="entry name" value="PRK04612.1"/>
    <property type="match status" value="1"/>
</dbReference>
<dbReference type="PANTHER" id="PTHR11986">
    <property type="entry name" value="AMINOTRANSFERASE CLASS III"/>
    <property type="match status" value="1"/>
</dbReference>
<dbReference type="PANTHER" id="PTHR11986:SF113">
    <property type="entry name" value="SUCCINYLORNITHINE TRANSAMINASE"/>
    <property type="match status" value="1"/>
</dbReference>
<dbReference type="Pfam" id="PF00202">
    <property type="entry name" value="Aminotran_3"/>
    <property type="match status" value="1"/>
</dbReference>
<dbReference type="PIRSF" id="PIRSF000521">
    <property type="entry name" value="Transaminase_4ab_Lys_Orn"/>
    <property type="match status" value="1"/>
</dbReference>
<dbReference type="SUPFAM" id="SSF53383">
    <property type="entry name" value="PLP-dependent transferases"/>
    <property type="match status" value="1"/>
</dbReference>
<dbReference type="PROSITE" id="PS00600">
    <property type="entry name" value="AA_TRANSFER_CLASS_3"/>
    <property type="match status" value="1"/>
</dbReference>
<organism>
    <name type="scientific">Xylella fastidiosa (strain 9a5c)</name>
    <dbReference type="NCBI Taxonomy" id="160492"/>
    <lineage>
        <taxon>Bacteria</taxon>
        <taxon>Pseudomonadati</taxon>
        <taxon>Pseudomonadota</taxon>
        <taxon>Gammaproteobacteria</taxon>
        <taxon>Lysobacterales</taxon>
        <taxon>Lysobacteraceae</taxon>
        <taxon>Xylella</taxon>
    </lineage>
</organism>
<sequence length="411" mass="43744">MSAVSESVLSLSRYYLPVYRPCQVVLVRGQGSRVWDEQGRDYLDLAAGIAVCCLGHCDPDLVAALVEQAGRLWHTSNVFYSEPSLRLAQELVDVSRFAERVFLCSSGTEANEAAIKLVRKWAAAQGRLPEHRTIVTFHGSFHGRTLAAVTATAQPKYQEGYEPLPGGFRYVDFNHIEALEAAMVGGDVAAVMLEPIQGEGGVMPVVSGYLAQVRALCDRYGALLVLDEIQCGMGRTGTLFAYWQEEVVPDIVTLAKGLGGGFPIGAMLAGPKVAEVMQFGAHGTTFGGNPMAAAVARVALRKLASVEIAANVQRQSVALRAGLEEISEAFGGVFTQVRGRGLMLGAVLAPLYAGQASAILEVAVEHGVLLLQAGPDVLRFVPALNVSDEELADGLVRLRAALGDYVSRFGG</sequence>
<protein>
    <recommendedName>
        <fullName evidence="1">Acetylornithine aminotransferase</fullName>
        <shortName evidence="1">ACOAT</shortName>
        <ecNumber evidence="1">2.6.1.11</ecNumber>
    </recommendedName>
</protein>
<name>ARGD_XYLFA</name>
<feature type="chain" id="PRO_0000112815" description="Acetylornithine aminotransferase">
    <location>
        <begin position="1"/>
        <end position="411"/>
    </location>
</feature>
<feature type="binding site" evidence="1">
    <location>
        <begin position="107"/>
        <end position="108"/>
    </location>
    <ligand>
        <name>pyridoxal 5'-phosphate</name>
        <dbReference type="ChEBI" id="CHEBI:597326"/>
    </ligand>
</feature>
<feature type="binding site" evidence="1">
    <location>
        <position position="141"/>
    </location>
    <ligand>
        <name>pyridoxal 5'-phosphate</name>
        <dbReference type="ChEBI" id="CHEBI:597326"/>
    </ligand>
</feature>
<feature type="binding site" evidence="1">
    <location>
        <position position="144"/>
    </location>
    <ligand>
        <name>N(2)-acetyl-L-ornithine</name>
        <dbReference type="ChEBI" id="CHEBI:57805"/>
    </ligand>
</feature>
<feature type="binding site" evidence="1">
    <location>
        <begin position="227"/>
        <end position="230"/>
    </location>
    <ligand>
        <name>pyridoxal 5'-phosphate</name>
        <dbReference type="ChEBI" id="CHEBI:597326"/>
    </ligand>
</feature>
<feature type="binding site" evidence="1">
    <location>
        <position position="284"/>
    </location>
    <ligand>
        <name>N(2)-acetyl-L-ornithine</name>
        <dbReference type="ChEBI" id="CHEBI:57805"/>
    </ligand>
</feature>
<feature type="binding site" evidence="1">
    <location>
        <position position="285"/>
    </location>
    <ligand>
        <name>pyridoxal 5'-phosphate</name>
        <dbReference type="ChEBI" id="CHEBI:597326"/>
    </ligand>
</feature>
<feature type="modified residue" description="N6-(pyridoxal phosphate)lysine" evidence="1">
    <location>
        <position position="256"/>
    </location>
</feature>
<proteinExistence type="inferred from homology"/>